<proteinExistence type="inferred from homology"/>
<accession>Q1QE85</accession>
<keyword id="KW-0012">Acyltransferase</keyword>
<keyword id="KW-0963">Cytoplasm</keyword>
<keyword id="KW-0408">Iron</keyword>
<keyword id="KW-0479">Metal-binding</keyword>
<keyword id="KW-0808">Transferase</keyword>
<keyword id="KW-0819">tRNA processing</keyword>
<feature type="chain" id="PRO_0000303501" description="tRNA N6-adenosine threonylcarbamoyltransferase">
    <location>
        <begin position="1"/>
        <end position="352"/>
    </location>
</feature>
<feature type="binding site" evidence="1">
    <location>
        <position position="117"/>
    </location>
    <ligand>
        <name>Fe cation</name>
        <dbReference type="ChEBI" id="CHEBI:24875"/>
    </ligand>
</feature>
<feature type="binding site" evidence="1">
    <location>
        <position position="121"/>
    </location>
    <ligand>
        <name>Fe cation</name>
        <dbReference type="ChEBI" id="CHEBI:24875"/>
    </ligand>
</feature>
<feature type="binding site" evidence="1">
    <location>
        <begin position="140"/>
        <end position="144"/>
    </location>
    <ligand>
        <name>substrate</name>
    </ligand>
</feature>
<feature type="binding site" evidence="1">
    <location>
        <position position="173"/>
    </location>
    <ligand>
        <name>substrate</name>
    </ligand>
</feature>
<feature type="binding site" evidence="1">
    <location>
        <position position="186"/>
    </location>
    <ligand>
        <name>substrate</name>
    </ligand>
</feature>
<feature type="binding site" evidence="1">
    <location>
        <position position="287"/>
    </location>
    <ligand>
        <name>substrate</name>
    </ligand>
</feature>
<feature type="binding site" evidence="1">
    <location>
        <position position="315"/>
    </location>
    <ligand>
        <name>Fe cation</name>
        <dbReference type="ChEBI" id="CHEBI:24875"/>
    </ligand>
</feature>
<name>TSAD_PSYCK</name>
<sequence>MKVLGLETSCDETGLAIFDSEQVTSDNKGLLGQVLYSQIELHALYGGVVPELASRDHIRKLVPLFNELLQQCNITKDEIDAVAYTKGPGLIGALMTGALFGRSLAYGLDIPAIGVHHMEGHLLAPLMGANPPAFPFVSLLVSGGHTLLIAAHGIGQYEILGESIDDAAGECFDKAAKMLGLPYPGGPNIAKLAESGNSDAYSLPRPMLHRGLDFSFSGMKTAVHNLIKDTPCSGGSGNGSDSDPQVRADIAASFQHAVVDTLVKKCVKALKQVNMSRLVIAGGVSANSHLRKTLERELAKINATVHYAPPALCTDNGAMIAYAGYERLQAGQADDLAVSCVPRWPMTELPAV</sequence>
<reference key="1">
    <citation type="submission" date="2006-03" db="EMBL/GenBank/DDBJ databases">
        <title>Complete sequence of chromosome of Psychrobacter cryohalolentis K5.</title>
        <authorList>
            <consortium name="US DOE Joint Genome Institute"/>
            <person name="Copeland A."/>
            <person name="Lucas S."/>
            <person name="Lapidus A."/>
            <person name="Barry K."/>
            <person name="Detter J.C."/>
            <person name="Glavina T."/>
            <person name="Hammon N."/>
            <person name="Israni S."/>
            <person name="Dalin E."/>
            <person name="Tice H."/>
            <person name="Pitluck S."/>
            <person name="Brettin T."/>
            <person name="Bruce D."/>
            <person name="Han C."/>
            <person name="Tapia R."/>
            <person name="Sims D.R."/>
            <person name="Gilna P."/>
            <person name="Schmutz J."/>
            <person name="Larimer F."/>
            <person name="Land M."/>
            <person name="Hauser L."/>
            <person name="Kyrpides N."/>
            <person name="Kim E."/>
            <person name="Richardson P."/>
        </authorList>
    </citation>
    <scope>NUCLEOTIDE SEQUENCE [LARGE SCALE GENOMIC DNA]</scope>
    <source>
        <strain>ATCC BAA-1226 / DSM 17306 / VKM B-2378 / K5</strain>
    </source>
</reference>
<comment type="function">
    <text evidence="1">Required for the formation of a threonylcarbamoyl group on adenosine at position 37 (t(6)A37) in tRNAs that read codons beginning with adenine. Is involved in the transfer of the threonylcarbamoyl moiety of threonylcarbamoyl-AMP (TC-AMP) to the N6 group of A37, together with TsaE and TsaB. TsaD likely plays a direct catalytic role in this reaction.</text>
</comment>
<comment type="catalytic activity">
    <reaction evidence="1">
        <text>L-threonylcarbamoyladenylate + adenosine(37) in tRNA = N(6)-L-threonylcarbamoyladenosine(37) in tRNA + AMP + H(+)</text>
        <dbReference type="Rhea" id="RHEA:37059"/>
        <dbReference type="Rhea" id="RHEA-COMP:10162"/>
        <dbReference type="Rhea" id="RHEA-COMP:10163"/>
        <dbReference type="ChEBI" id="CHEBI:15378"/>
        <dbReference type="ChEBI" id="CHEBI:73682"/>
        <dbReference type="ChEBI" id="CHEBI:74411"/>
        <dbReference type="ChEBI" id="CHEBI:74418"/>
        <dbReference type="ChEBI" id="CHEBI:456215"/>
        <dbReference type="EC" id="2.3.1.234"/>
    </reaction>
</comment>
<comment type="cofactor">
    <cofactor evidence="1">
        <name>Fe(2+)</name>
        <dbReference type="ChEBI" id="CHEBI:29033"/>
    </cofactor>
    <text evidence="1">Binds 1 Fe(2+) ion per subunit.</text>
</comment>
<comment type="subcellular location">
    <subcellularLocation>
        <location evidence="1">Cytoplasm</location>
    </subcellularLocation>
</comment>
<comment type="similarity">
    <text evidence="1">Belongs to the KAE1 / TsaD family.</text>
</comment>
<protein>
    <recommendedName>
        <fullName evidence="1">tRNA N6-adenosine threonylcarbamoyltransferase</fullName>
        <ecNumber evidence="1">2.3.1.234</ecNumber>
    </recommendedName>
    <alternativeName>
        <fullName evidence="1">N6-L-threonylcarbamoyladenine synthase</fullName>
        <shortName evidence="1">t(6)A synthase</shortName>
    </alternativeName>
    <alternativeName>
        <fullName evidence="1">t(6)A37 threonylcarbamoyladenosine biosynthesis protein TsaD</fullName>
    </alternativeName>
    <alternativeName>
        <fullName evidence="1">tRNA threonylcarbamoyladenosine biosynthesis protein TsaD</fullName>
    </alternativeName>
</protein>
<evidence type="ECO:0000255" key="1">
    <source>
        <dbReference type="HAMAP-Rule" id="MF_01445"/>
    </source>
</evidence>
<organism>
    <name type="scientific">Psychrobacter cryohalolentis (strain ATCC BAA-1226 / DSM 17306 / VKM B-2378 / K5)</name>
    <dbReference type="NCBI Taxonomy" id="335284"/>
    <lineage>
        <taxon>Bacteria</taxon>
        <taxon>Pseudomonadati</taxon>
        <taxon>Pseudomonadota</taxon>
        <taxon>Gammaproteobacteria</taxon>
        <taxon>Moraxellales</taxon>
        <taxon>Moraxellaceae</taxon>
        <taxon>Psychrobacter</taxon>
    </lineage>
</organism>
<gene>
    <name evidence="1" type="primary">tsaD</name>
    <name type="synonym">gcp</name>
    <name type="ordered locus">Pcryo_0234</name>
</gene>
<dbReference type="EC" id="2.3.1.234" evidence="1"/>
<dbReference type="EMBL" id="CP000323">
    <property type="protein sequence ID" value="ABE74018.1"/>
    <property type="molecule type" value="Genomic_DNA"/>
</dbReference>
<dbReference type="RefSeq" id="WP_011512606.1">
    <property type="nucleotide sequence ID" value="NC_007969.1"/>
</dbReference>
<dbReference type="SMR" id="Q1QE85"/>
<dbReference type="STRING" id="335284.Pcryo_0234"/>
<dbReference type="KEGG" id="pcr:Pcryo_0234"/>
<dbReference type="eggNOG" id="COG0533">
    <property type="taxonomic scope" value="Bacteria"/>
</dbReference>
<dbReference type="HOGENOM" id="CLU_023208_0_2_6"/>
<dbReference type="Proteomes" id="UP000002425">
    <property type="component" value="Chromosome"/>
</dbReference>
<dbReference type="GO" id="GO:0005737">
    <property type="term" value="C:cytoplasm"/>
    <property type="evidence" value="ECO:0007669"/>
    <property type="project" value="UniProtKB-SubCell"/>
</dbReference>
<dbReference type="GO" id="GO:0005506">
    <property type="term" value="F:iron ion binding"/>
    <property type="evidence" value="ECO:0007669"/>
    <property type="project" value="UniProtKB-UniRule"/>
</dbReference>
<dbReference type="GO" id="GO:0061711">
    <property type="term" value="F:N(6)-L-threonylcarbamoyladenine synthase activity"/>
    <property type="evidence" value="ECO:0007669"/>
    <property type="project" value="UniProtKB-EC"/>
</dbReference>
<dbReference type="GO" id="GO:0002949">
    <property type="term" value="P:tRNA threonylcarbamoyladenosine modification"/>
    <property type="evidence" value="ECO:0007669"/>
    <property type="project" value="UniProtKB-UniRule"/>
</dbReference>
<dbReference type="CDD" id="cd24133">
    <property type="entry name" value="ASKHA_NBD_TsaD_bac"/>
    <property type="match status" value="1"/>
</dbReference>
<dbReference type="FunFam" id="3.30.420.40:FF:000040">
    <property type="entry name" value="tRNA N6-adenosine threonylcarbamoyltransferase"/>
    <property type="match status" value="1"/>
</dbReference>
<dbReference type="Gene3D" id="3.30.420.40">
    <property type="match status" value="2"/>
</dbReference>
<dbReference type="HAMAP" id="MF_01445">
    <property type="entry name" value="TsaD"/>
    <property type="match status" value="1"/>
</dbReference>
<dbReference type="InterPro" id="IPR043129">
    <property type="entry name" value="ATPase_NBD"/>
</dbReference>
<dbReference type="InterPro" id="IPR000905">
    <property type="entry name" value="Gcp-like_dom"/>
</dbReference>
<dbReference type="InterPro" id="IPR017861">
    <property type="entry name" value="KAE1/TsaD"/>
</dbReference>
<dbReference type="InterPro" id="IPR017860">
    <property type="entry name" value="Peptidase_M22_CS"/>
</dbReference>
<dbReference type="InterPro" id="IPR022450">
    <property type="entry name" value="TsaD"/>
</dbReference>
<dbReference type="NCBIfam" id="TIGR00329">
    <property type="entry name" value="gcp_kae1"/>
    <property type="match status" value="1"/>
</dbReference>
<dbReference type="NCBIfam" id="TIGR03723">
    <property type="entry name" value="T6A_TsaD_YgjD"/>
    <property type="match status" value="1"/>
</dbReference>
<dbReference type="PANTHER" id="PTHR11735">
    <property type="entry name" value="TRNA N6-ADENOSINE THREONYLCARBAMOYLTRANSFERASE"/>
    <property type="match status" value="1"/>
</dbReference>
<dbReference type="PANTHER" id="PTHR11735:SF6">
    <property type="entry name" value="TRNA N6-ADENOSINE THREONYLCARBAMOYLTRANSFERASE, MITOCHONDRIAL"/>
    <property type="match status" value="1"/>
</dbReference>
<dbReference type="Pfam" id="PF00814">
    <property type="entry name" value="TsaD"/>
    <property type="match status" value="1"/>
</dbReference>
<dbReference type="PRINTS" id="PR00789">
    <property type="entry name" value="OSIALOPTASE"/>
</dbReference>
<dbReference type="SUPFAM" id="SSF53067">
    <property type="entry name" value="Actin-like ATPase domain"/>
    <property type="match status" value="2"/>
</dbReference>
<dbReference type="PROSITE" id="PS01016">
    <property type="entry name" value="GLYCOPROTEASE"/>
    <property type="match status" value="1"/>
</dbReference>